<dbReference type="EC" id="5.1.1.3" evidence="3"/>
<dbReference type="EMBL" id="AL591978">
    <property type="protein sequence ID" value="CAC99315.1"/>
    <property type="molecule type" value="Genomic_DNA"/>
</dbReference>
<dbReference type="PIR" id="AE1229">
    <property type="entry name" value="AE1229"/>
</dbReference>
<dbReference type="RefSeq" id="NP_464762.1">
    <property type="nucleotide sequence ID" value="NC_003210.1"/>
</dbReference>
<dbReference type="RefSeq" id="WP_003723856.1">
    <property type="nucleotide sequence ID" value="NZ_CP149495.1"/>
</dbReference>
<dbReference type="PDB" id="3HFR">
    <property type="method" value="X-ray"/>
    <property type="resolution" value="2.30 A"/>
    <property type="chains" value="A/B=1-266"/>
</dbReference>
<dbReference type="PDB" id="3IST">
    <property type="method" value="X-ray"/>
    <property type="resolution" value="1.65 A"/>
    <property type="chains" value="A/B=1-266"/>
</dbReference>
<dbReference type="PDB" id="3ISV">
    <property type="method" value="X-ray"/>
    <property type="resolution" value="1.85 A"/>
    <property type="chains" value="A/B=1-266"/>
</dbReference>
<dbReference type="PDBsum" id="3HFR"/>
<dbReference type="PDBsum" id="3IST"/>
<dbReference type="PDBsum" id="3ISV"/>
<dbReference type="SMR" id="Q8Y7N7"/>
<dbReference type="STRING" id="169963.gene:17593893"/>
<dbReference type="DrugBank" id="DB02343">
    <property type="generic name" value="3,6,9,12,15-Pentaoxaheptadecane"/>
</dbReference>
<dbReference type="PaxDb" id="169963-lmo1237"/>
<dbReference type="EnsemblBacteria" id="CAC99315">
    <property type="protein sequence ID" value="CAC99315"/>
    <property type="gene ID" value="CAC99315"/>
</dbReference>
<dbReference type="GeneID" id="986027"/>
<dbReference type="KEGG" id="lmo:lmo1237"/>
<dbReference type="PATRIC" id="fig|169963.11.peg.1269"/>
<dbReference type="eggNOG" id="COG0796">
    <property type="taxonomic scope" value="Bacteria"/>
</dbReference>
<dbReference type="HOGENOM" id="CLU_052344_0_2_9"/>
<dbReference type="OrthoDB" id="9801055at2"/>
<dbReference type="PhylomeDB" id="Q8Y7N7"/>
<dbReference type="BioCyc" id="LMON169963:LMO1237-MONOMER"/>
<dbReference type="UniPathway" id="UPA00219"/>
<dbReference type="EvolutionaryTrace" id="Q8Y7N7"/>
<dbReference type="Proteomes" id="UP000000817">
    <property type="component" value="Chromosome"/>
</dbReference>
<dbReference type="GO" id="GO:0008881">
    <property type="term" value="F:glutamate racemase activity"/>
    <property type="evidence" value="ECO:0000318"/>
    <property type="project" value="GO_Central"/>
</dbReference>
<dbReference type="GO" id="GO:0071555">
    <property type="term" value="P:cell wall organization"/>
    <property type="evidence" value="ECO:0007669"/>
    <property type="project" value="UniProtKB-KW"/>
</dbReference>
<dbReference type="GO" id="GO:0009252">
    <property type="term" value="P:peptidoglycan biosynthetic process"/>
    <property type="evidence" value="ECO:0000318"/>
    <property type="project" value="GO_Central"/>
</dbReference>
<dbReference type="GO" id="GO:0008360">
    <property type="term" value="P:regulation of cell shape"/>
    <property type="evidence" value="ECO:0007669"/>
    <property type="project" value="UniProtKB-KW"/>
</dbReference>
<dbReference type="FunFam" id="3.40.50.1860:FF:000002">
    <property type="entry name" value="Glutamate racemase"/>
    <property type="match status" value="1"/>
</dbReference>
<dbReference type="Gene3D" id="3.40.50.1860">
    <property type="match status" value="2"/>
</dbReference>
<dbReference type="HAMAP" id="MF_00258">
    <property type="entry name" value="Glu_racemase"/>
    <property type="match status" value="1"/>
</dbReference>
<dbReference type="InterPro" id="IPR015942">
    <property type="entry name" value="Asp/Glu/hydantoin_racemase"/>
</dbReference>
<dbReference type="InterPro" id="IPR001920">
    <property type="entry name" value="Asp/Glu_race"/>
</dbReference>
<dbReference type="InterPro" id="IPR018187">
    <property type="entry name" value="Asp/Glu_racemase_AS_1"/>
</dbReference>
<dbReference type="InterPro" id="IPR033134">
    <property type="entry name" value="Asp/Glu_racemase_AS_2"/>
</dbReference>
<dbReference type="InterPro" id="IPR004391">
    <property type="entry name" value="Glu_race"/>
</dbReference>
<dbReference type="NCBIfam" id="TIGR00067">
    <property type="entry name" value="glut_race"/>
    <property type="match status" value="1"/>
</dbReference>
<dbReference type="NCBIfam" id="NF002035">
    <property type="entry name" value="PRK00865.1-3"/>
    <property type="match status" value="1"/>
</dbReference>
<dbReference type="PANTHER" id="PTHR21198">
    <property type="entry name" value="GLUTAMATE RACEMASE"/>
    <property type="match status" value="1"/>
</dbReference>
<dbReference type="PANTHER" id="PTHR21198:SF2">
    <property type="entry name" value="GLUTAMATE RACEMASE"/>
    <property type="match status" value="1"/>
</dbReference>
<dbReference type="Pfam" id="PF01177">
    <property type="entry name" value="Asp_Glu_race"/>
    <property type="match status" value="1"/>
</dbReference>
<dbReference type="SUPFAM" id="SSF53681">
    <property type="entry name" value="Aspartate/glutamate racemase"/>
    <property type="match status" value="2"/>
</dbReference>
<dbReference type="PROSITE" id="PS00923">
    <property type="entry name" value="ASP_GLU_RACEMASE_1"/>
    <property type="match status" value="1"/>
</dbReference>
<dbReference type="PROSITE" id="PS00924">
    <property type="entry name" value="ASP_GLU_RACEMASE_2"/>
    <property type="match status" value="1"/>
</dbReference>
<feature type="chain" id="PRO_0000095487" description="Glutamate racemase">
    <location>
        <begin position="1"/>
        <end position="266"/>
    </location>
</feature>
<feature type="active site" description="Proton donor/acceptor" evidence="1 3">
    <location>
        <position position="72"/>
    </location>
</feature>
<feature type="active site" description="Proton donor/acceptor" evidence="1 3">
    <location>
        <position position="183"/>
    </location>
</feature>
<feature type="binding site" evidence="2 3">
    <location>
        <begin position="9"/>
        <end position="10"/>
    </location>
    <ligand>
        <name>substrate</name>
    </ligand>
</feature>
<feature type="binding site" evidence="2 3 4">
    <location>
        <begin position="41"/>
        <end position="42"/>
    </location>
    <ligand>
        <name>substrate</name>
    </ligand>
</feature>
<feature type="binding site" evidence="2 3">
    <location>
        <begin position="73"/>
        <end position="74"/>
    </location>
    <ligand>
        <name>substrate</name>
    </ligand>
</feature>
<feature type="binding site" evidence="2 3">
    <location>
        <begin position="184"/>
        <end position="185"/>
    </location>
    <ligand>
        <name>substrate</name>
    </ligand>
</feature>
<feature type="strand" evidence="5">
    <location>
        <begin position="5"/>
        <end position="12"/>
    </location>
</feature>
<feature type="helix" evidence="5">
    <location>
        <begin position="15"/>
        <end position="24"/>
    </location>
</feature>
<feature type="strand" evidence="5">
    <location>
        <begin position="30"/>
        <end position="34"/>
    </location>
</feature>
<feature type="helix" evidence="5">
    <location>
        <begin position="36"/>
        <end position="38"/>
    </location>
</feature>
<feature type="helix" evidence="5">
    <location>
        <begin position="46"/>
        <end position="62"/>
    </location>
</feature>
<feature type="strand" evidence="5">
    <location>
        <begin position="66"/>
        <end position="70"/>
    </location>
</feature>
<feature type="helix" evidence="5">
    <location>
        <begin position="73"/>
        <end position="86"/>
    </location>
</feature>
<feature type="strand" evidence="5">
    <location>
        <begin position="91"/>
        <end position="94"/>
    </location>
</feature>
<feature type="helix" evidence="5">
    <location>
        <begin position="95"/>
        <end position="105"/>
    </location>
</feature>
<feature type="strand" evidence="5">
    <location>
        <begin position="107"/>
        <end position="115"/>
    </location>
</feature>
<feature type="helix" evidence="5">
    <location>
        <begin position="117"/>
        <end position="122"/>
    </location>
</feature>
<feature type="helix" evidence="5">
    <location>
        <begin position="124"/>
        <end position="132"/>
    </location>
</feature>
<feature type="strand" evidence="5">
    <location>
        <begin position="137"/>
        <end position="142"/>
    </location>
</feature>
<feature type="helix" evidence="5">
    <location>
        <begin position="145"/>
        <end position="151"/>
    </location>
</feature>
<feature type="helix" evidence="5">
    <location>
        <begin position="158"/>
        <end position="168"/>
    </location>
</feature>
<feature type="helix" evidence="5">
    <location>
        <begin position="169"/>
        <end position="173"/>
    </location>
</feature>
<feature type="strand" evidence="5">
    <location>
        <begin position="178"/>
        <end position="181"/>
    </location>
</feature>
<feature type="helix" evidence="5">
    <location>
        <begin position="186"/>
        <end position="189"/>
    </location>
</feature>
<feature type="helix" evidence="5">
    <location>
        <begin position="190"/>
        <end position="197"/>
    </location>
</feature>
<feature type="strand" evidence="5">
    <location>
        <begin position="201"/>
        <end position="204"/>
    </location>
</feature>
<feature type="helix" evidence="5">
    <location>
        <begin position="207"/>
        <end position="220"/>
    </location>
</feature>
<feature type="strand" evidence="5">
    <location>
        <begin position="234"/>
        <end position="239"/>
    </location>
</feature>
<feature type="helix" evidence="5">
    <location>
        <begin position="241"/>
        <end position="252"/>
    </location>
</feature>
<feature type="strand" evidence="5">
    <location>
        <begin position="259"/>
        <end position="261"/>
    </location>
</feature>
<sequence>MKQAIGFIDSGVGGLTVVREVLKQLPHEQVYYLGDTARCPYGPRDKEEVAKFTWEMTNFLVDRGIKMLVIACNTATAAALYDIREKLDIPVIGVIQPGSRAALKATRNNKIGVLGTLGTVESMAYPTALKGLNRRVEVDSLACPKFVSVVESGEYKSAIAKKVVAESLLPLKSTKIDTVILGCTHYPLLKPIIENFMGDGVAVINSGEETASEVSALLDYHNLLDATDEEIEHRFFTTGSTQIFKDIAKDWLNMPDMTVEHIKLGK</sequence>
<organism>
    <name type="scientific">Listeria monocytogenes serovar 1/2a (strain ATCC BAA-679 / EGD-e)</name>
    <dbReference type="NCBI Taxonomy" id="169963"/>
    <lineage>
        <taxon>Bacteria</taxon>
        <taxon>Bacillati</taxon>
        <taxon>Bacillota</taxon>
        <taxon>Bacilli</taxon>
        <taxon>Bacillales</taxon>
        <taxon>Listeriaceae</taxon>
        <taxon>Listeria</taxon>
    </lineage>
</organism>
<evidence type="ECO:0000250" key="1">
    <source>
        <dbReference type="UniProtKB" id="O58403"/>
    </source>
</evidence>
<evidence type="ECO:0000250" key="2">
    <source>
        <dbReference type="UniProtKB" id="P22634"/>
    </source>
</evidence>
<evidence type="ECO:0000255" key="3">
    <source>
        <dbReference type="HAMAP-Rule" id="MF_00258"/>
    </source>
</evidence>
<evidence type="ECO:0007744" key="4">
    <source>
        <dbReference type="PDB" id="3IST"/>
    </source>
</evidence>
<evidence type="ECO:0007829" key="5">
    <source>
        <dbReference type="PDB" id="3IST"/>
    </source>
</evidence>
<name>MURI_LISMO</name>
<reference key="1">
    <citation type="journal article" date="2001" name="Science">
        <title>Comparative genomics of Listeria species.</title>
        <authorList>
            <person name="Glaser P."/>
            <person name="Frangeul L."/>
            <person name="Buchrieser C."/>
            <person name="Rusniok C."/>
            <person name="Amend A."/>
            <person name="Baquero F."/>
            <person name="Berche P."/>
            <person name="Bloecker H."/>
            <person name="Brandt P."/>
            <person name="Chakraborty T."/>
            <person name="Charbit A."/>
            <person name="Chetouani F."/>
            <person name="Couve E."/>
            <person name="de Daruvar A."/>
            <person name="Dehoux P."/>
            <person name="Domann E."/>
            <person name="Dominguez-Bernal G."/>
            <person name="Duchaud E."/>
            <person name="Durant L."/>
            <person name="Dussurget O."/>
            <person name="Entian K.-D."/>
            <person name="Fsihi H."/>
            <person name="Garcia-del Portillo F."/>
            <person name="Garrido P."/>
            <person name="Gautier L."/>
            <person name="Goebel W."/>
            <person name="Gomez-Lopez N."/>
            <person name="Hain T."/>
            <person name="Hauf J."/>
            <person name="Jackson D."/>
            <person name="Jones L.-M."/>
            <person name="Kaerst U."/>
            <person name="Kreft J."/>
            <person name="Kuhn M."/>
            <person name="Kunst F."/>
            <person name="Kurapkat G."/>
            <person name="Madueno E."/>
            <person name="Maitournam A."/>
            <person name="Mata Vicente J."/>
            <person name="Ng E."/>
            <person name="Nedjari H."/>
            <person name="Nordsiek G."/>
            <person name="Novella S."/>
            <person name="de Pablos B."/>
            <person name="Perez-Diaz J.-C."/>
            <person name="Purcell R."/>
            <person name="Remmel B."/>
            <person name="Rose M."/>
            <person name="Schlueter T."/>
            <person name="Simoes N."/>
            <person name="Tierrez A."/>
            <person name="Vazquez-Boland J.-A."/>
            <person name="Voss H."/>
            <person name="Wehland J."/>
            <person name="Cossart P."/>
        </authorList>
    </citation>
    <scope>NUCLEOTIDE SEQUENCE [LARGE SCALE GENOMIC DNA]</scope>
    <source>
        <strain>ATCC BAA-679 / EGD-e</strain>
    </source>
</reference>
<reference key="2">
    <citation type="submission" date="2009-08" db="PDB data bank">
        <title>Crystal structure of glutamate racemase from Listeria monocytogenes in complex with succinic acid.</title>
        <authorList>
            <person name="Majorek K.A."/>
            <person name="Chruszcz M."/>
            <person name="Skarina T."/>
            <person name="Onopriyenko O."/>
            <person name="Stam J."/>
            <person name="Anderson W.F."/>
            <person name="Savchenko A."/>
            <person name="Bujnicki J.M."/>
            <person name="Minor W."/>
        </authorList>
    </citation>
    <scope>X-RAY CRYSTALLOGRAPHY (1.65 ANGSTROMS) IN COMPLEX WITH SUCCINATE</scope>
</reference>
<protein>
    <recommendedName>
        <fullName evidence="3">Glutamate racemase</fullName>
        <ecNumber evidence="3">5.1.1.3</ecNumber>
    </recommendedName>
</protein>
<comment type="function">
    <text evidence="3">Provides the (R)-glutamate required for cell wall biosynthesis.</text>
</comment>
<comment type="catalytic activity">
    <reaction evidence="3">
        <text>L-glutamate = D-glutamate</text>
        <dbReference type="Rhea" id="RHEA:12813"/>
        <dbReference type="ChEBI" id="CHEBI:29985"/>
        <dbReference type="ChEBI" id="CHEBI:29986"/>
        <dbReference type="EC" id="5.1.1.3"/>
    </reaction>
</comment>
<comment type="pathway">
    <text evidence="3">Cell wall biogenesis; peptidoglycan biosynthesis.</text>
</comment>
<comment type="similarity">
    <text evidence="3">Belongs to the aspartate/glutamate racemases family.</text>
</comment>
<gene>
    <name evidence="3" type="primary">murI</name>
    <name type="synonym">racE</name>
    <name type="ordered locus">lmo1237</name>
</gene>
<keyword id="KW-0002">3D-structure</keyword>
<keyword id="KW-0133">Cell shape</keyword>
<keyword id="KW-0961">Cell wall biogenesis/degradation</keyword>
<keyword id="KW-0413">Isomerase</keyword>
<keyword id="KW-0573">Peptidoglycan synthesis</keyword>
<keyword id="KW-1185">Reference proteome</keyword>
<proteinExistence type="evidence at protein level"/>
<accession>Q8Y7N7</accession>